<organism>
    <name type="scientific">Geobacter metallireducens (strain ATCC 53774 / DSM 7210 / GS-15)</name>
    <dbReference type="NCBI Taxonomy" id="269799"/>
    <lineage>
        <taxon>Bacteria</taxon>
        <taxon>Pseudomonadati</taxon>
        <taxon>Thermodesulfobacteriota</taxon>
        <taxon>Desulfuromonadia</taxon>
        <taxon>Geobacterales</taxon>
        <taxon>Geobacteraceae</taxon>
        <taxon>Geobacter</taxon>
    </lineage>
</organism>
<reference key="1">
    <citation type="journal article" date="2009" name="BMC Microbiol.">
        <title>The genome sequence of Geobacter metallireducens: features of metabolism, physiology and regulation common and dissimilar to Geobacter sulfurreducens.</title>
        <authorList>
            <person name="Aklujkar M."/>
            <person name="Krushkal J."/>
            <person name="DiBartolo G."/>
            <person name="Lapidus A."/>
            <person name="Land M.L."/>
            <person name="Lovley D.R."/>
        </authorList>
    </citation>
    <scope>NUCLEOTIDE SEQUENCE [LARGE SCALE GENOMIC DNA]</scope>
    <source>
        <strain>ATCC 53774 / DSM 7210 / GS-15</strain>
    </source>
</reference>
<dbReference type="EMBL" id="CP000148">
    <property type="protein sequence ID" value="ABB30886.1"/>
    <property type="molecule type" value="Genomic_DNA"/>
</dbReference>
<dbReference type="RefSeq" id="WP_004514254.1">
    <property type="nucleotide sequence ID" value="NC_007517.1"/>
</dbReference>
<dbReference type="SMR" id="Q39XY8"/>
<dbReference type="STRING" id="269799.Gmet_0644"/>
<dbReference type="KEGG" id="gme:Gmet_0644"/>
<dbReference type="eggNOG" id="COG1841">
    <property type="taxonomic scope" value="Bacteria"/>
</dbReference>
<dbReference type="HOGENOM" id="CLU_131047_2_1_7"/>
<dbReference type="Proteomes" id="UP000007073">
    <property type="component" value="Chromosome"/>
</dbReference>
<dbReference type="GO" id="GO:0022625">
    <property type="term" value="C:cytosolic large ribosomal subunit"/>
    <property type="evidence" value="ECO:0007669"/>
    <property type="project" value="TreeGrafter"/>
</dbReference>
<dbReference type="GO" id="GO:0003735">
    <property type="term" value="F:structural constituent of ribosome"/>
    <property type="evidence" value="ECO:0007669"/>
    <property type="project" value="InterPro"/>
</dbReference>
<dbReference type="GO" id="GO:0006412">
    <property type="term" value="P:translation"/>
    <property type="evidence" value="ECO:0007669"/>
    <property type="project" value="InterPro"/>
</dbReference>
<dbReference type="CDD" id="cd01658">
    <property type="entry name" value="Ribosomal_L30"/>
    <property type="match status" value="1"/>
</dbReference>
<dbReference type="FunFam" id="3.30.1390.20:FF:000001">
    <property type="entry name" value="50S ribosomal protein L30"/>
    <property type="match status" value="1"/>
</dbReference>
<dbReference type="Gene3D" id="3.30.1390.20">
    <property type="entry name" value="Ribosomal protein L30, ferredoxin-like fold domain"/>
    <property type="match status" value="1"/>
</dbReference>
<dbReference type="HAMAP" id="MF_01371_B">
    <property type="entry name" value="Ribosomal_uL30_B"/>
    <property type="match status" value="1"/>
</dbReference>
<dbReference type="InterPro" id="IPR036919">
    <property type="entry name" value="Ribo_uL30_ferredoxin-like_sf"/>
</dbReference>
<dbReference type="InterPro" id="IPR005996">
    <property type="entry name" value="Ribosomal_uL30_bac-type"/>
</dbReference>
<dbReference type="InterPro" id="IPR016082">
    <property type="entry name" value="Ribosomal_uL30_ferredoxin-like"/>
</dbReference>
<dbReference type="NCBIfam" id="TIGR01308">
    <property type="entry name" value="rpmD_bact"/>
    <property type="match status" value="1"/>
</dbReference>
<dbReference type="PANTHER" id="PTHR15892:SF2">
    <property type="entry name" value="LARGE RIBOSOMAL SUBUNIT PROTEIN UL30M"/>
    <property type="match status" value="1"/>
</dbReference>
<dbReference type="PANTHER" id="PTHR15892">
    <property type="entry name" value="MITOCHONDRIAL RIBOSOMAL PROTEIN L30"/>
    <property type="match status" value="1"/>
</dbReference>
<dbReference type="Pfam" id="PF00327">
    <property type="entry name" value="Ribosomal_L30"/>
    <property type="match status" value="1"/>
</dbReference>
<dbReference type="PIRSF" id="PIRSF002211">
    <property type="entry name" value="Ribosomal_L30_bac-type"/>
    <property type="match status" value="1"/>
</dbReference>
<dbReference type="SUPFAM" id="SSF55129">
    <property type="entry name" value="Ribosomal protein L30p/L7e"/>
    <property type="match status" value="1"/>
</dbReference>
<proteinExistence type="inferred from homology"/>
<evidence type="ECO:0000255" key="1">
    <source>
        <dbReference type="HAMAP-Rule" id="MF_01371"/>
    </source>
</evidence>
<evidence type="ECO:0000305" key="2"/>
<sequence>MSAGLKITLIKSQIGAPTAQKAVLNGMGLNKLNKTVVLKNTPEIVGMIAKVSHMVKVEE</sequence>
<comment type="subunit">
    <text evidence="1">Part of the 50S ribosomal subunit.</text>
</comment>
<comment type="similarity">
    <text evidence="1">Belongs to the universal ribosomal protein uL30 family.</text>
</comment>
<gene>
    <name evidence="1" type="primary">rpmD</name>
    <name type="ordered locus">Gmet_0644</name>
</gene>
<name>RL30_GEOMG</name>
<keyword id="KW-1185">Reference proteome</keyword>
<keyword id="KW-0687">Ribonucleoprotein</keyword>
<keyword id="KW-0689">Ribosomal protein</keyword>
<accession>Q39XY8</accession>
<protein>
    <recommendedName>
        <fullName evidence="1">Large ribosomal subunit protein uL30</fullName>
    </recommendedName>
    <alternativeName>
        <fullName evidence="2">50S ribosomal protein L30</fullName>
    </alternativeName>
</protein>
<feature type="chain" id="PRO_1000056044" description="Large ribosomal subunit protein uL30">
    <location>
        <begin position="1"/>
        <end position="59"/>
    </location>
</feature>